<name>PGH1_HUMAN</name>
<keyword id="KW-0002">3D-structure</keyword>
<keyword id="KW-0025">Alternative splicing</keyword>
<keyword id="KW-0223">Dioxygenase</keyword>
<keyword id="KW-1015">Disulfide bond</keyword>
<keyword id="KW-0245">EGF-like domain</keyword>
<keyword id="KW-0256">Endoplasmic reticulum</keyword>
<keyword id="KW-0275">Fatty acid biosynthesis</keyword>
<keyword id="KW-0276">Fatty acid metabolism</keyword>
<keyword id="KW-0325">Glycoprotein</keyword>
<keyword id="KW-0349">Heme</keyword>
<keyword id="KW-0408">Iron</keyword>
<keyword id="KW-0444">Lipid biosynthesis</keyword>
<keyword id="KW-0443">Lipid metabolism</keyword>
<keyword id="KW-0472">Membrane</keyword>
<keyword id="KW-0479">Metal-binding</keyword>
<keyword id="KW-0492">Microsome</keyword>
<keyword id="KW-0560">Oxidoreductase</keyword>
<keyword id="KW-0575">Peroxidase</keyword>
<keyword id="KW-0643">Prostaglandin biosynthesis</keyword>
<keyword id="KW-0644">Prostaglandin metabolism</keyword>
<keyword id="KW-1267">Proteomics identification</keyword>
<keyword id="KW-1185">Reference proteome</keyword>
<keyword id="KW-0732">Signal</keyword>
<accession>P23219</accession>
<accession>A8K1V7</accession>
<accession>B4DHQ2</accession>
<accession>B4E2S5</accession>
<accession>Q15122</accession>
<accession>Q3HY28</accession>
<accession>Q3HY29</accession>
<accession>Q5T7T6</accession>
<accession>Q5T7T7</accession>
<accession>Q5T7T8</accession>
<protein>
    <recommendedName>
        <fullName evidence="21">Prostaglandin G/H synthase 1</fullName>
        <ecNumber evidence="14">1.14.99.1</ecNumber>
    </recommendedName>
    <alternativeName>
        <fullName evidence="18">Cyclooxygenase-1</fullName>
        <shortName evidence="18">COX-1</shortName>
    </alternativeName>
    <alternativeName>
        <fullName>Prostaglandin H2 synthase 1</fullName>
        <shortName>PGH synthase 1</shortName>
        <shortName>PGHS-1</shortName>
        <shortName>PHS 1</shortName>
    </alternativeName>
    <alternativeName>
        <fullName>Prostaglandin-endoperoxide synthase 1</fullName>
    </alternativeName>
</protein>
<organism>
    <name type="scientific">Homo sapiens</name>
    <name type="common">Human</name>
    <dbReference type="NCBI Taxonomy" id="9606"/>
    <lineage>
        <taxon>Eukaryota</taxon>
        <taxon>Metazoa</taxon>
        <taxon>Chordata</taxon>
        <taxon>Craniata</taxon>
        <taxon>Vertebrata</taxon>
        <taxon>Euteleostomi</taxon>
        <taxon>Mammalia</taxon>
        <taxon>Eutheria</taxon>
        <taxon>Euarchontoglires</taxon>
        <taxon>Primates</taxon>
        <taxon>Haplorrhini</taxon>
        <taxon>Catarrhini</taxon>
        <taxon>Hominidae</taxon>
        <taxon>Homo</taxon>
    </lineage>
</organism>
<comment type="function">
    <text evidence="2 14 22 23">Dual cyclooxygenase and peroxidase that plays an important role in the biosynthesis pathway of prostanoids, a class of C20 oxylipins mainly derived from arachidonate ((5Z,8Z,11Z,14Z)-eicosatetraenoate, AA, C20:4(n-6)), with a particular role in the inflammatory response. The cyclooxygenase activity oxygenates AA to the hydroperoxy endoperoxide prostaglandin G2 (PGG2), and the peroxidase activity reduces PGG2 to the hydroxy endoperoxide prostaglandin H2 (PGH2), the precursor of all 2-series prostaglandins and thromboxanes. This complex transformation is initiated by abstraction of hydrogen at carbon 13 (with S-stereochemistry), followed by insertion of molecular O2 to form the endoperoxide bridge between carbon 9 and 11 that defines prostaglandins. The insertion of a second molecule of O2 (bis-oxygenase activity) yields a hydroperoxy group in PGG2 that is then reduced to PGH2 by two electrons (PubMed:7947975). Involved in the constitutive production of prostanoids in particular in the stomach and platelets. In gastric epithelial cells, it is a key step in the generation of prostaglandins, such as prostaglandin E2 (PGE2), which plays an important role in cytoprotection. In platelets, it is involved in the generation of thromboxane A2 (TXA2), which promotes platelet activation and aggregation, vasoconstriction and proliferation of vascular smooth muscle cells (Probable). Can also use linoleate (LA, (9Z,12Z)-octadecadienoate, C18:2(n-6)) as substrate and produce hydroxyoctadecadienoates (HODEs) in a regio- and stereospecific manner, being (9R)-HODE ((9R)-hydroxy-(10E,12Z)-octadecadienoate) and (13S)-HODE ((13S)-hydroxy-(9Z,11E)-octadecadienoate) its major products (By similarity).</text>
</comment>
<comment type="catalytic activity">
    <reaction evidence="14">
        <text>(5Z,8Z,11Z,14Z)-eicosatetraenoate + AH2 + 2 O2 = prostaglandin H2 + A + H2O</text>
        <dbReference type="Rhea" id="RHEA:23728"/>
        <dbReference type="ChEBI" id="CHEBI:13193"/>
        <dbReference type="ChEBI" id="CHEBI:15377"/>
        <dbReference type="ChEBI" id="CHEBI:15379"/>
        <dbReference type="ChEBI" id="CHEBI:17499"/>
        <dbReference type="ChEBI" id="CHEBI:32395"/>
        <dbReference type="ChEBI" id="CHEBI:57405"/>
        <dbReference type="EC" id="1.14.99.1"/>
    </reaction>
    <physiologicalReaction direction="left-to-right" evidence="24">
        <dbReference type="Rhea" id="RHEA:23729"/>
    </physiologicalReaction>
</comment>
<comment type="catalytic activity">
    <reaction evidence="14">
        <text>(5Z,8Z,11Z,14Z)-eicosatetraenoate + 2 O2 = prostaglandin G2</text>
        <dbReference type="Rhea" id="RHEA:42596"/>
        <dbReference type="ChEBI" id="CHEBI:15379"/>
        <dbReference type="ChEBI" id="CHEBI:32395"/>
        <dbReference type="ChEBI" id="CHEBI:82629"/>
    </reaction>
    <physiologicalReaction direction="left-to-right" evidence="24">
        <dbReference type="Rhea" id="RHEA:42597"/>
    </physiologicalReaction>
</comment>
<comment type="catalytic activity">
    <reaction evidence="14">
        <text>prostaglandin G2 + AH2 = prostaglandin H2 + A + H2O</text>
        <dbReference type="Rhea" id="RHEA:42600"/>
        <dbReference type="ChEBI" id="CHEBI:13193"/>
        <dbReference type="ChEBI" id="CHEBI:15377"/>
        <dbReference type="ChEBI" id="CHEBI:17499"/>
        <dbReference type="ChEBI" id="CHEBI:57405"/>
        <dbReference type="ChEBI" id="CHEBI:82629"/>
    </reaction>
    <physiologicalReaction direction="left-to-right" evidence="24">
        <dbReference type="Rhea" id="RHEA:42601"/>
    </physiologicalReaction>
</comment>
<comment type="catalytic activity">
    <reaction evidence="2">
        <text>(9Z,12Z)-octadecadienoate + AH2 + O2 = (9R)-hydroxy-(10E,12Z)-octadecadienoate + A + H2O</text>
        <dbReference type="Rhea" id="RHEA:75447"/>
        <dbReference type="ChEBI" id="CHEBI:13193"/>
        <dbReference type="ChEBI" id="CHEBI:15377"/>
        <dbReference type="ChEBI" id="CHEBI:15379"/>
        <dbReference type="ChEBI" id="CHEBI:17499"/>
        <dbReference type="ChEBI" id="CHEBI:30245"/>
        <dbReference type="ChEBI" id="CHEBI:77895"/>
    </reaction>
    <physiologicalReaction direction="left-to-right" evidence="2">
        <dbReference type="Rhea" id="RHEA:75448"/>
    </physiologicalReaction>
</comment>
<comment type="catalytic activity">
    <reaction evidence="2">
        <text>(9Z,12Z)-octadecadienoate + AH2 + O2 = (9S)-hydroxy-(10E,12Z)-octadecadienoate + A + H2O</text>
        <dbReference type="Rhea" id="RHEA:75459"/>
        <dbReference type="ChEBI" id="CHEBI:13193"/>
        <dbReference type="ChEBI" id="CHEBI:15377"/>
        <dbReference type="ChEBI" id="CHEBI:15379"/>
        <dbReference type="ChEBI" id="CHEBI:17499"/>
        <dbReference type="ChEBI" id="CHEBI:30245"/>
        <dbReference type="ChEBI" id="CHEBI:77852"/>
    </reaction>
    <physiologicalReaction direction="left-to-right" evidence="2">
        <dbReference type="Rhea" id="RHEA:75460"/>
    </physiologicalReaction>
</comment>
<comment type="catalytic activity">
    <reaction evidence="2">
        <text>(9Z,12Z)-octadecadienoate + AH2 + O2 = (13S)-hydroxy-(9Z,11E)-octadecadienoate + A + H2O</text>
        <dbReference type="Rhea" id="RHEA:75451"/>
        <dbReference type="ChEBI" id="CHEBI:13193"/>
        <dbReference type="ChEBI" id="CHEBI:15377"/>
        <dbReference type="ChEBI" id="CHEBI:15379"/>
        <dbReference type="ChEBI" id="CHEBI:17499"/>
        <dbReference type="ChEBI" id="CHEBI:30245"/>
        <dbReference type="ChEBI" id="CHEBI:90850"/>
    </reaction>
    <physiologicalReaction direction="left-to-right" evidence="2">
        <dbReference type="Rhea" id="RHEA:75452"/>
    </physiologicalReaction>
</comment>
<comment type="catalytic activity">
    <reaction evidence="2">
        <text>(9Z,12Z)-octadecadienoate + AH2 + O2 = (13R)-hydroxy-(9Z,11E)-octadecadienoate + A + H2O</text>
        <dbReference type="Rhea" id="RHEA:75455"/>
        <dbReference type="ChEBI" id="CHEBI:13193"/>
        <dbReference type="ChEBI" id="CHEBI:15377"/>
        <dbReference type="ChEBI" id="CHEBI:15379"/>
        <dbReference type="ChEBI" id="CHEBI:17499"/>
        <dbReference type="ChEBI" id="CHEBI:30245"/>
        <dbReference type="ChEBI" id="CHEBI:136655"/>
    </reaction>
    <physiologicalReaction direction="left-to-right" evidence="2">
        <dbReference type="Rhea" id="RHEA:75456"/>
    </physiologicalReaction>
</comment>
<comment type="cofactor">
    <cofactor evidence="1">
        <name>heme b</name>
        <dbReference type="ChEBI" id="CHEBI:60344"/>
    </cofactor>
    <text evidence="1">Binds 1 heme b (iron(II)-protoporphyrin IX) group per subunit.</text>
</comment>
<comment type="activity regulation">
    <text evidence="14">The cyclooxygenase activity is inhibited by nonsteroidal anti-inflammatory drugs (NSAIDs) including ibuprofen, flurbiprofen, ketoprofen, naproxen, flurbiprofen, anirolac, fenclofenac and diclofenac.</text>
</comment>
<comment type="biophysicochemical properties">
    <kinetics>
        <KM evidence="14">5.1 uM for arachidonate</KM>
    </kinetics>
</comment>
<comment type="pathway">
    <text evidence="14">Lipid metabolism; prostaglandin biosynthesis.</text>
</comment>
<comment type="subunit">
    <text>Homodimer.</text>
</comment>
<comment type="interaction">
    <interactant intactId="EBI-6655935">
        <id>P23219</id>
    </interactant>
    <interactant intactId="EBI-2875816">
        <id>Q9NP61</id>
        <label>ARFGAP3</label>
    </interactant>
    <organismsDiffer>false</organismsDiffer>
    <experiments>3</experiments>
</comment>
<comment type="interaction">
    <interactant intactId="EBI-6655935">
        <id>P23219</id>
    </interactant>
    <interactant intactId="EBI-10210351">
        <id>P48645</id>
        <label>NMU</label>
    </interactant>
    <organismsDiffer>false</organismsDiffer>
    <experiments>3</experiments>
</comment>
<comment type="interaction">
    <interactant intactId="EBI-6655935">
        <id>P23219</id>
    </interactant>
    <interactant intactId="EBI-3906138">
        <id>P53801</id>
        <label>PTTG1IP</label>
    </interactant>
    <organismsDiffer>false</organismsDiffer>
    <experiments>3</experiments>
</comment>
<comment type="interaction">
    <interactant intactId="EBI-6655935">
        <id>P23219</id>
    </interactant>
    <interactant intactId="EBI-25839575">
        <id>Q8WZ73-3</id>
        <label>RFFL</label>
    </interactant>
    <organismsDiffer>false</organismsDiffer>
    <experiments>3</experiments>
</comment>
<comment type="subcellular location">
    <subcellularLocation>
        <location>Microsome membrane</location>
        <topology>Peripheral membrane protein</topology>
    </subcellularLocation>
    <subcellularLocation>
        <location>Endoplasmic reticulum membrane</location>
        <topology>Peripheral membrane protein</topology>
    </subcellularLocation>
</comment>
<comment type="alternative products">
    <event type="alternative splicing"/>
    <isoform>
        <id>P23219-1</id>
        <name>1</name>
        <name>Long</name>
        <sequence type="displayed"/>
    </isoform>
    <isoform>
        <id>P23219-2</id>
        <name>2</name>
        <name>Short</name>
        <sequence type="described" ref="VSP_004673"/>
    </isoform>
    <isoform>
        <id>P23219-3</id>
        <name>3</name>
        <sequence type="described" ref="VSP_053936 VSP_004673"/>
    </isoform>
    <isoform>
        <id>P23219-4</id>
        <name>4</name>
        <sequence type="described" ref="VSP_046932"/>
    </isoform>
    <isoform>
        <id>P23219-5</id>
        <name>5</name>
        <name>1b3</name>
        <sequence type="described" ref="VSP_054862"/>
    </isoform>
    <isoform>
        <id>P23219-6</id>
        <name>6</name>
        <name>1b2</name>
        <sequence type="described" ref="VSP_054863"/>
    </isoform>
</comment>
<comment type="miscellaneous">
    <text>The conversion of arachidonate to prostaglandin H2 is a 2 step reaction: a cyclooxygenase (COX) reaction which converts arachidonate to prostaglandin G2 (PGG2) and a peroxidase reaction in which PGG2 is reduced to prostaglandin H2 (PGH2). The cyclooxygenase reaction occurs in a hydrophobic channel in the core of the enzyme. The peroxidase reaction occurs at a heme-containing active site located near the protein surface. The nonsteroidal anti-inflammatory drugs (NSAIDs) binding site corresponds to the cyclooxygenase active site.</text>
</comment>
<comment type="miscellaneous">
    <text>Conversion of arachidonate to prostaglandin H2 is mediated by 2 different isozymes: the constitutive PTGS1 and the inducible PTGS2. PTGS1 is expressed constitutively and generally produces prostanoids acutely in response to hormonal stimuli to fine-tune physiological processes requiring instantaneous, continuous regulation (e.g. hemostasis). PTGS2 is inducible and typically produces prostanoids that mediate responses to physiological stresses such as infection and inflammation.</text>
</comment>
<comment type="miscellaneous">
    <text>PTGS1 and PTGS2 are the targets of nonsteroidal anti-inflammatory drugs (NSAIDs) including aspirin and ibuprofen. Aspirin is able to produce an irreversible inactivation of the enzyme through a serine acetylation. Inhibition of the PGHSs with NSAIDs acutely reduces inflammation, pain, and fever, and long-term use of these drugs reduces fatal thrombotic events, as well as the development of colon cancer and Alzheimer's disease. PTGS2 is the principal isozyme responsible for production of inflammatory prostaglandins. New generation PTGSs inhibitors strive to be selective for PTGS2, to avoid side effects such as gastrointestinal complications and ulceration.</text>
</comment>
<comment type="similarity">
    <text evidence="21">Belongs to the prostaglandin G/H synthase family.</text>
</comment>
<reference key="1">
    <citation type="journal article" date="1989" name="Biochem. Biophys. Res. Commun.">
        <title>Cloning of human gene encoding prostaglandin endoperoxide synthase and primary structure of the enzyme.</title>
        <authorList>
            <person name="Yokoyama C."/>
            <person name="Tanabe T."/>
        </authorList>
    </citation>
    <scope>NUCLEOTIDE SEQUENCE [GENOMIC DNA] (ISOFORM 1)</scope>
    <scope>VARIANT ARG-8</scope>
</reference>
<reference key="2">
    <citation type="journal article" date="1991" name="FASEB J.">
        <title>Human platelet/erythroleukemia cell prostaglandin G/H synthase: cDNA cloning, expression, and gene chromosomal assignment.</title>
        <authorList>
            <person name="Funk C.D."/>
            <person name="Funk L.B."/>
            <person name="Kennedy M.E."/>
            <person name="Pong A.S."/>
            <person name="Fitzgerald G.A."/>
        </authorList>
    </citation>
    <scope>NUCLEOTIDE SEQUENCE [MRNA] (ISOFORM 1)</scope>
    <scope>MUTAGENESIS OF SER-529</scope>
    <scope>VARIANT ARG-8</scope>
</reference>
<reference key="3">
    <citation type="journal article" date="1992" name="Biochem. Biophys. Res. Commun.">
        <title>Immunoaffinity purification and cDNA cloning of human platelet prostaglandin endoperoxide synthase (cyclooxygenase).</title>
        <authorList>
            <person name="Takahashi Y."/>
            <person name="Ueda N."/>
            <person name="Yoshimoto T."/>
            <person name="Yamamoto S."/>
            <person name="Yokoyama C."/>
            <person name="Miyata A."/>
            <person name="Tanabe T."/>
            <person name="Fuse I."/>
            <person name="Hattori A."/>
            <person name="Shibata A."/>
        </authorList>
    </citation>
    <scope>NUCLEOTIDE SEQUENCE [MRNA] (ISOFORM 1)</scope>
    <scope>VARIANT ARG-8</scope>
    <source>
        <tissue>Platelet</tissue>
    </source>
</reference>
<reference key="4">
    <citation type="journal article" date="1992" name="J. Biol. Chem.">
        <title>Alternative splicing of human prostaglandin G/H synthase mRNA and evidence of differential regulation of the resulting transcripts by transforming growth factor beta 1, interleukin 1 beta, and tumor necrosis factor alpha.</title>
        <authorList>
            <person name="Diaz A."/>
            <person name="Reginato A.M."/>
            <person name="Jimenez S.A."/>
        </authorList>
    </citation>
    <scope>NUCLEOTIDE SEQUENCE [MRNA] (ISOFORMS 1 AND 2)</scope>
    <scope>VARIANT ARG-8</scope>
    <source>
        <tissue>Lung fibroblast</tissue>
    </source>
</reference>
<reference key="5">
    <citation type="journal article" date="2005" name="J. Pharmacol. Exp. Ther.">
        <title>Cloning, expression, and functional characterization of human cyclooxygenase-1 splicing variants: evidence for intron 1 retention.</title>
        <authorList>
            <person name="Qin N."/>
            <person name="Zhang S.P."/>
            <person name="Reitz T.L."/>
            <person name="Mei J.M."/>
            <person name="Flores C.M."/>
        </authorList>
    </citation>
    <scope>NUCLEOTIDE SEQUENCE [MRNA] (ISOFORMS 5 AND 6)</scope>
</reference>
<reference key="6">
    <citation type="journal article" date="2002" name="Blood Coagul. Fibrinolysis">
        <title>Characterization of the human prostaglandin H synthase 1 gene (PTGS1): exclusion by genetic linkage analysis as a second modifier gene in familial thrombosis.</title>
        <authorList>
            <person name="Scott B.T."/>
            <person name="Hasstedt S.J."/>
            <person name="Bovill E.G."/>
            <person name="Callas P.W."/>
            <person name="Valliere J.E."/>
            <person name="Wang L.-H."/>
            <person name="Wu K.K."/>
            <person name="Long G.L."/>
        </authorList>
    </citation>
    <scope>NUCLEOTIDE SEQUENCE [GENOMIC DNA] (ISOFORM 1)</scope>
    <scope>VARIANTS ARG-8 AND LEU-17</scope>
</reference>
<reference key="7">
    <citation type="journal article" date="2004" name="Nat. Genet.">
        <title>Complete sequencing and characterization of 21,243 full-length human cDNAs.</title>
        <authorList>
            <person name="Ota T."/>
            <person name="Suzuki Y."/>
            <person name="Nishikawa T."/>
            <person name="Otsuki T."/>
            <person name="Sugiyama T."/>
            <person name="Irie R."/>
            <person name="Wakamatsu A."/>
            <person name="Hayashi K."/>
            <person name="Sato H."/>
            <person name="Nagai K."/>
            <person name="Kimura K."/>
            <person name="Makita H."/>
            <person name="Sekine M."/>
            <person name="Obayashi M."/>
            <person name="Nishi T."/>
            <person name="Shibahara T."/>
            <person name="Tanaka T."/>
            <person name="Ishii S."/>
            <person name="Yamamoto J."/>
            <person name="Saito K."/>
            <person name="Kawai Y."/>
            <person name="Isono Y."/>
            <person name="Nakamura Y."/>
            <person name="Nagahari K."/>
            <person name="Murakami K."/>
            <person name="Yasuda T."/>
            <person name="Iwayanagi T."/>
            <person name="Wagatsuma M."/>
            <person name="Shiratori A."/>
            <person name="Sudo H."/>
            <person name="Hosoiri T."/>
            <person name="Kaku Y."/>
            <person name="Kodaira H."/>
            <person name="Kondo H."/>
            <person name="Sugawara M."/>
            <person name="Takahashi M."/>
            <person name="Kanda K."/>
            <person name="Yokoi T."/>
            <person name="Furuya T."/>
            <person name="Kikkawa E."/>
            <person name="Omura Y."/>
            <person name="Abe K."/>
            <person name="Kamihara K."/>
            <person name="Katsuta N."/>
            <person name="Sato K."/>
            <person name="Tanikawa M."/>
            <person name="Yamazaki M."/>
            <person name="Ninomiya K."/>
            <person name="Ishibashi T."/>
            <person name="Yamashita H."/>
            <person name="Murakawa K."/>
            <person name="Fujimori K."/>
            <person name="Tanai H."/>
            <person name="Kimata M."/>
            <person name="Watanabe M."/>
            <person name="Hiraoka S."/>
            <person name="Chiba Y."/>
            <person name="Ishida S."/>
            <person name="Ono Y."/>
            <person name="Takiguchi S."/>
            <person name="Watanabe S."/>
            <person name="Yosida M."/>
            <person name="Hotuta T."/>
            <person name="Kusano J."/>
            <person name="Kanehori K."/>
            <person name="Takahashi-Fujii A."/>
            <person name="Hara H."/>
            <person name="Tanase T.-O."/>
            <person name="Nomura Y."/>
            <person name="Togiya S."/>
            <person name="Komai F."/>
            <person name="Hara R."/>
            <person name="Takeuchi K."/>
            <person name="Arita M."/>
            <person name="Imose N."/>
            <person name="Musashino K."/>
            <person name="Yuuki H."/>
            <person name="Oshima A."/>
            <person name="Sasaki N."/>
            <person name="Aotsuka S."/>
            <person name="Yoshikawa Y."/>
            <person name="Matsunawa H."/>
            <person name="Ichihara T."/>
            <person name="Shiohata N."/>
            <person name="Sano S."/>
            <person name="Moriya S."/>
            <person name="Momiyama H."/>
            <person name="Satoh N."/>
            <person name="Takami S."/>
            <person name="Terashima Y."/>
            <person name="Suzuki O."/>
            <person name="Nakagawa S."/>
            <person name="Senoh A."/>
            <person name="Mizoguchi H."/>
            <person name="Goto Y."/>
            <person name="Shimizu F."/>
            <person name="Wakebe H."/>
            <person name="Hishigaki H."/>
            <person name="Watanabe T."/>
            <person name="Sugiyama A."/>
            <person name="Takemoto M."/>
            <person name="Kawakami B."/>
            <person name="Yamazaki M."/>
            <person name="Watanabe K."/>
            <person name="Kumagai A."/>
            <person name="Itakura S."/>
            <person name="Fukuzumi Y."/>
            <person name="Fujimori Y."/>
            <person name="Komiyama M."/>
            <person name="Tashiro H."/>
            <person name="Tanigami A."/>
            <person name="Fujiwara T."/>
            <person name="Ono T."/>
            <person name="Yamada K."/>
            <person name="Fujii Y."/>
            <person name="Ozaki K."/>
            <person name="Hirao M."/>
            <person name="Ohmori Y."/>
            <person name="Kawabata A."/>
            <person name="Hikiji T."/>
            <person name="Kobatake N."/>
            <person name="Inagaki H."/>
            <person name="Ikema Y."/>
            <person name="Okamoto S."/>
            <person name="Okitani R."/>
            <person name="Kawakami T."/>
            <person name="Noguchi S."/>
            <person name="Itoh T."/>
            <person name="Shigeta K."/>
            <person name="Senba T."/>
            <person name="Matsumura K."/>
            <person name="Nakajima Y."/>
            <person name="Mizuno T."/>
            <person name="Morinaga M."/>
            <person name="Sasaki M."/>
            <person name="Togashi T."/>
            <person name="Oyama M."/>
            <person name="Hata H."/>
            <person name="Watanabe M."/>
            <person name="Komatsu T."/>
            <person name="Mizushima-Sugano J."/>
            <person name="Satoh T."/>
            <person name="Shirai Y."/>
            <person name="Takahashi Y."/>
            <person name="Nakagawa K."/>
            <person name="Okumura K."/>
            <person name="Nagase T."/>
            <person name="Nomura N."/>
            <person name="Kikuchi H."/>
            <person name="Masuho Y."/>
            <person name="Yamashita R."/>
            <person name="Nakai K."/>
            <person name="Yada T."/>
            <person name="Nakamura Y."/>
            <person name="Ohara O."/>
            <person name="Isogai T."/>
            <person name="Sugano S."/>
        </authorList>
    </citation>
    <scope>NUCLEOTIDE SEQUENCE [LARGE SCALE MRNA] (ISOFORMS 1; 3 AND 4)</scope>
    <scope>VARIANT ARG-8</scope>
    <source>
        <tissue>Caudate nucleus</tissue>
        <tissue>Hippocampus</tissue>
        <tissue>Trachea</tissue>
    </source>
</reference>
<reference key="8">
    <citation type="submission" date="2003-10" db="EMBL/GenBank/DDBJ databases">
        <authorList>
            <consortium name="SeattleSNPs variation discovery resource"/>
        </authorList>
    </citation>
    <scope>NUCLEOTIDE SEQUENCE [GENOMIC DNA] (ISOFORM 1)</scope>
    <scope>VARIANTS ARG-8; LEU-17; HIS-53; LEU-149 AND MET-237</scope>
</reference>
<reference key="9">
    <citation type="journal article" date="2004" name="Nature">
        <title>DNA sequence and analysis of human chromosome 9.</title>
        <authorList>
            <person name="Humphray S.J."/>
            <person name="Oliver K."/>
            <person name="Hunt A.R."/>
            <person name="Plumb R.W."/>
            <person name="Loveland J.E."/>
            <person name="Howe K.L."/>
            <person name="Andrews T.D."/>
            <person name="Searle S."/>
            <person name="Hunt S.E."/>
            <person name="Scott C.E."/>
            <person name="Jones M.C."/>
            <person name="Ainscough R."/>
            <person name="Almeida J.P."/>
            <person name="Ambrose K.D."/>
            <person name="Ashwell R.I.S."/>
            <person name="Babbage A.K."/>
            <person name="Babbage S."/>
            <person name="Bagguley C.L."/>
            <person name="Bailey J."/>
            <person name="Banerjee R."/>
            <person name="Barker D.J."/>
            <person name="Barlow K.F."/>
            <person name="Bates K."/>
            <person name="Beasley H."/>
            <person name="Beasley O."/>
            <person name="Bird C.P."/>
            <person name="Bray-Allen S."/>
            <person name="Brown A.J."/>
            <person name="Brown J.Y."/>
            <person name="Burford D."/>
            <person name="Burrill W."/>
            <person name="Burton J."/>
            <person name="Carder C."/>
            <person name="Carter N.P."/>
            <person name="Chapman J.C."/>
            <person name="Chen Y."/>
            <person name="Clarke G."/>
            <person name="Clark S.Y."/>
            <person name="Clee C.M."/>
            <person name="Clegg S."/>
            <person name="Collier R.E."/>
            <person name="Corby N."/>
            <person name="Crosier M."/>
            <person name="Cummings A.T."/>
            <person name="Davies J."/>
            <person name="Dhami P."/>
            <person name="Dunn M."/>
            <person name="Dutta I."/>
            <person name="Dyer L.W."/>
            <person name="Earthrowl M.E."/>
            <person name="Faulkner L."/>
            <person name="Fleming C.J."/>
            <person name="Frankish A."/>
            <person name="Frankland J.A."/>
            <person name="French L."/>
            <person name="Fricker D.G."/>
            <person name="Garner P."/>
            <person name="Garnett J."/>
            <person name="Ghori J."/>
            <person name="Gilbert J.G.R."/>
            <person name="Glison C."/>
            <person name="Grafham D.V."/>
            <person name="Gribble S."/>
            <person name="Griffiths C."/>
            <person name="Griffiths-Jones S."/>
            <person name="Grocock R."/>
            <person name="Guy J."/>
            <person name="Hall R.E."/>
            <person name="Hammond S."/>
            <person name="Harley J.L."/>
            <person name="Harrison E.S.I."/>
            <person name="Hart E.A."/>
            <person name="Heath P.D."/>
            <person name="Henderson C.D."/>
            <person name="Hopkins B.L."/>
            <person name="Howard P.J."/>
            <person name="Howden P.J."/>
            <person name="Huckle E."/>
            <person name="Johnson C."/>
            <person name="Johnson D."/>
            <person name="Joy A.A."/>
            <person name="Kay M."/>
            <person name="Keenan S."/>
            <person name="Kershaw J.K."/>
            <person name="Kimberley A.M."/>
            <person name="King A."/>
            <person name="Knights A."/>
            <person name="Laird G.K."/>
            <person name="Langford C."/>
            <person name="Lawlor S."/>
            <person name="Leongamornlert D.A."/>
            <person name="Leversha M."/>
            <person name="Lloyd C."/>
            <person name="Lloyd D.M."/>
            <person name="Lovell J."/>
            <person name="Martin S."/>
            <person name="Mashreghi-Mohammadi M."/>
            <person name="Matthews L."/>
            <person name="McLaren S."/>
            <person name="McLay K.E."/>
            <person name="McMurray A."/>
            <person name="Milne S."/>
            <person name="Nickerson T."/>
            <person name="Nisbett J."/>
            <person name="Nordsiek G."/>
            <person name="Pearce A.V."/>
            <person name="Peck A.I."/>
            <person name="Porter K.M."/>
            <person name="Pandian R."/>
            <person name="Pelan S."/>
            <person name="Phillimore B."/>
            <person name="Povey S."/>
            <person name="Ramsey Y."/>
            <person name="Rand V."/>
            <person name="Scharfe M."/>
            <person name="Sehra H.K."/>
            <person name="Shownkeen R."/>
            <person name="Sims S.K."/>
            <person name="Skuce C.D."/>
            <person name="Smith M."/>
            <person name="Steward C.A."/>
            <person name="Swarbreck D."/>
            <person name="Sycamore N."/>
            <person name="Tester J."/>
            <person name="Thorpe A."/>
            <person name="Tracey A."/>
            <person name="Tromans A."/>
            <person name="Thomas D.W."/>
            <person name="Wall M."/>
            <person name="Wallis J.M."/>
            <person name="West A.P."/>
            <person name="Whitehead S.L."/>
            <person name="Willey D.L."/>
            <person name="Williams S.A."/>
            <person name="Wilming L."/>
            <person name="Wray P.W."/>
            <person name="Young L."/>
            <person name="Ashurst J.L."/>
            <person name="Coulson A."/>
            <person name="Blocker H."/>
            <person name="Durbin R.M."/>
            <person name="Sulston J.E."/>
            <person name="Hubbard T."/>
            <person name="Jackson M.J."/>
            <person name="Bentley D.R."/>
            <person name="Beck S."/>
            <person name="Rogers J."/>
            <person name="Dunham I."/>
        </authorList>
    </citation>
    <scope>NUCLEOTIDE SEQUENCE [LARGE SCALE GENOMIC DNA]</scope>
</reference>
<reference key="10">
    <citation type="submission" date="2005-07" db="EMBL/GenBank/DDBJ databases">
        <authorList>
            <person name="Mural R.J."/>
            <person name="Istrail S."/>
            <person name="Sutton G.G."/>
            <person name="Florea L."/>
            <person name="Halpern A.L."/>
            <person name="Mobarry C.M."/>
            <person name="Lippert R."/>
            <person name="Walenz B."/>
            <person name="Shatkay H."/>
            <person name="Dew I."/>
            <person name="Miller J.R."/>
            <person name="Flanigan M.J."/>
            <person name="Edwards N.J."/>
            <person name="Bolanos R."/>
            <person name="Fasulo D."/>
            <person name="Halldorsson B.V."/>
            <person name="Hannenhalli S."/>
            <person name="Turner R."/>
            <person name="Yooseph S."/>
            <person name="Lu F."/>
            <person name="Nusskern D.R."/>
            <person name="Shue B.C."/>
            <person name="Zheng X.H."/>
            <person name="Zhong F."/>
            <person name="Delcher A.L."/>
            <person name="Huson D.H."/>
            <person name="Kravitz S.A."/>
            <person name="Mouchard L."/>
            <person name="Reinert K."/>
            <person name="Remington K.A."/>
            <person name="Clark A.G."/>
            <person name="Waterman M.S."/>
            <person name="Eichler E.E."/>
            <person name="Adams M.D."/>
            <person name="Hunkapiller M.W."/>
            <person name="Myers E.W."/>
            <person name="Venter J.C."/>
        </authorList>
    </citation>
    <scope>NUCLEOTIDE SEQUENCE [LARGE SCALE GENOMIC DNA]</scope>
    <scope>VARIANT ARG-8</scope>
</reference>
<reference key="11">
    <citation type="journal article" date="2004" name="Genome Res.">
        <title>The status, quality, and expansion of the NIH full-length cDNA project: the Mammalian Gene Collection (MGC).</title>
        <authorList>
            <consortium name="The MGC Project Team"/>
        </authorList>
    </citation>
    <scope>NUCLEOTIDE SEQUENCE [LARGE SCALE MRNA] (ISOFORM 1)</scope>
    <scope>VARIANT ARG-8</scope>
    <source>
        <tissue>Brain</tissue>
    </source>
</reference>
<reference key="12">
    <citation type="journal article" date="1994" name="Biochim. Biophys. Acta">
        <title>Purification, characterization and selective inhibition of human prostaglandin G/H synthase 1 and 2 expressed in the baculovirus system.</title>
        <authorList>
            <person name="Barnett J."/>
            <person name="Chow J."/>
            <person name="Ives D."/>
            <person name="Chiou M."/>
            <person name="Mackenzie R."/>
            <person name="Osen E."/>
            <person name="Nguyen B."/>
            <person name="Tsing S."/>
            <person name="Bach C."/>
            <person name="Freire J."/>
        </authorList>
    </citation>
    <scope>CHARACTERIZATION</scope>
    <scope>FUNCTION</scope>
    <scope>CATALYTIC ACTIVITY</scope>
    <scope>BIOPHYSICOCHEMICAL PROPERTIES</scope>
</reference>
<reference key="13">
    <citation type="journal article" date="2000" name="Annu. Rev. Biochem.">
        <title>Cyclooxygenases: structural, cellular, and molecular biology.</title>
        <authorList>
            <person name="Smith W.L."/>
            <person name="DeWitt D.L."/>
            <person name="Garavito R.M."/>
        </authorList>
    </citation>
    <scope>REVIEW ON FUNCTION; TISSUE SPECIFICITY AND INHIBITION BY NSAIDS</scope>
</reference>
<reference key="14">
    <citation type="journal article" date="2014" name="World J. Gastrointest. Pharmacol. Ther.">
        <title>Aspirin, cyclooxygenase inhibition and colorectal cancer.</title>
        <authorList>
            <person name="Sostres C."/>
            <person name="Gargallo C.J."/>
            <person name="Lanas A."/>
        </authorList>
    </citation>
    <scope>REVIEW ON FUNCTION; INHIBITION BY ASPIRIN AND INVOLVEMENT IN COLORECTAL CANCER</scope>
</reference>
<reference key="15">
    <citation type="journal article" date="2015" name="Proteomics">
        <title>N-terminome analysis of the human mitochondrial proteome.</title>
        <authorList>
            <person name="Vaca Jacome A.S."/>
            <person name="Rabilloud T."/>
            <person name="Schaeffer-Reiss C."/>
            <person name="Rompais M."/>
            <person name="Ayoub D."/>
            <person name="Lane L."/>
            <person name="Bairoch A."/>
            <person name="Van Dorsselaer A."/>
            <person name="Carapito C."/>
        </authorList>
    </citation>
    <scope>IDENTIFICATION BY MASS SPECTROMETRY [LARGE SCALE ANALYSIS]</scope>
</reference>
<reference key="16">
    <citation type="journal article" date="2004" name="Carcinogenesis">
        <title>Arachidonate lipoxygenase (ALOX) and cyclooxygenase (COX) polymorphisms and colon cancer risk.</title>
        <authorList>
            <person name="Goodman J.E."/>
            <person name="Bowman E.D."/>
            <person name="Chanock S.J."/>
            <person name="Alberg A.J."/>
            <person name="Harris C.C."/>
        </authorList>
    </citation>
    <scope>VARIANTS MET-237 AND ILE-481</scope>
</reference>
<evidence type="ECO:0000250" key="1"/>
<evidence type="ECO:0000250" key="2">
    <source>
        <dbReference type="UniProtKB" id="P05979"/>
    </source>
</evidence>
<evidence type="ECO:0000255" key="3"/>
<evidence type="ECO:0000255" key="4">
    <source>
        <dbReference type="PROSITE-ProRule" id="PRU00076"/>
    </source>
</evidence>
<evidence type="ECO:0000255" key="5">
    <source>
        <dbReference type="PROSITE-ProRule" id="PRU00298"/>
    </source>
</evidence>
<evidence type="ECO:0000269" key="6">
    <source>
    </source>
</evidence>
<evidence type="ECO:0000269" key="7">
    <source>
    </source>
</evidence>
<evidence type="ECO:0000269" key="8">
    <source>
    </source>
</evidence>
<evidence type="ECO:0000269" key="9">
    <source>
    </source>
</evidence>
<evidence type="ECO:0000269" key="10">
    <source>
    </source>
</evidence>
<evidence type="ECO:0000269" key="11">
    <source>
    </source>
</evidence>
<evidence type="ECO:0000269" key="12">
    <source>
    </source>
</evidence>
<evidence type="ECO:0000269" key="13">
    <source>
    </source>
</evidence>
<evidence type="ECO:0000269" key="14">
    <source>
    </source>
</evidence>
<evidence type="ECO:0000269" key="15">
    <source ref="10"/>
</evidence>
<evidence type="ECO:0000269" key="16">
    <source ref="8"/>
</evidence>
<evidence type="ECO:0000303" key="17">
    <source>
    </source>
</evidence>
<evidence type="ECO:0000303" key="18">
    <source>
    </source>
</evidence>
<evidence type="ECO:0000303" key="19">
    <source>
    </source>
</evidence>
<evidence type="ECO:0000303" key="20">
    <source>
    </source>
</evidence>
<evidence type="ECO:0000305" key="21"/>
<evidence type="ECO:0000305" key="22">
    <source>
    </source>
</evidence>
<evidence type="ECO:0000305" key="23">
    <source>
    </source>
</evidence>
<evidence type="ECO:0000305" key="24">
    <source>
    </source>
</evidence>
<evidence type="ECO:0000312" key="25">
    <source>
        <dbReference type="HGNC" id="HGNC:9604"/>
    </source>
</evidence>
<evidence type="ECO:0007829" key="26">
    <source>
        <dbReference type="PDB" id="6Y3C"/>
    </source>
</evidence>
<proteinExistence type="evidence at protein level"/>
<gene>
    <name evidence="25" type="primary">PTGS1</name>
    <name evidence="18" type="synonym">COX1</name>
</gene>
<dbReference type="EC" id="1.14.99.1" evidence="14"/>
<dbReference type="EMBL" id="M31822">
    <property type="protein sequence ID" value="AAA36439.1"/>
    <property type="molecule type" value="Genomic_DNA"/>
</dbReference>
<dbReference type="EMBL" id="M31812">
    <property type="protein sequence ID" value="AAA36439.1"/>
    <property type="status" value="JOINED"/>
    <property type="molecule type" value="Genomic_DNA"/>
</dbReference>
<dbReference type="EMBL" id="M31813">
    <property type="protein sequence ID" value="AAA36439.1"/>
    <property type="status" value="JOINED"/>
    <property type="molecule type" value="Genomic_DNA"/>
</dbReference>
<dbReference type="EMBL" id="M31814">
    <property type="protein sequence ID" value="AAA36439.1"/>
    <property type="status" value="JOINED"/>
    <property type="molecule type" value="Genomic_DNA"/>
</dbReference>
<dbReference type="EMBL" id="M31815">
    <property type="protein sequence ID" value="AAA36439.1"/>
    <property type="status" value="JOINED"/>
    <property type="molecule type" value="Genomic_DNA"/>
</dbReference>
<dbReference type="EMBL" id="M31816">
    <property type="protein sequence ID" value="AAA36439.1"/>
    <property type="status" value="JOINED"/>
    <property type="molecule type" value="Genomic_DNA"/>
</dbReference>
<dbReference type="EMBL" id="M31817">
    <property type="protein sequence ID" value="AAA36439.1"/>
    <property type="status" value="JOINED"/>
    <property type="molecule type" value="Genomic_DNA"/>
</dbReference>
<dbReference type="EMBL" id="M31818">
    <property type="protein sequence ID" value="AAA36439.1"/>
    <property type="status" value="JOINED"/>
    <property type="molecule type" value="Genomic_DNA"/>
</dbReference>
<dbReference type="EMBL" id="M31819">
    <property type="protein sequence ID" value="AAA36439.1"/>
    <property type="status" value="JOINED"/>
    <property type="molecule type" value="Genomic_DNA"/>
</dbReference>
<dbReference type="EMBL" id="M31820">
    <property type="protein sequence ID" value="AAA36439.1"/>
    <property type="status" value="JOINED"/>
    <property type="molecule type" value="Genomic_DNA"/>
</dbReference>
<dbReference type="EMBL" id="M31821">
    <property type="protein sequence ID" value="AAA36439.1"/>
    <property type="status" value="JOINED"/>
    <property type="molecule type" value="Genomic_DNA"/>
</dbReference>
<dbReference type="EMBL" id="M59979">
    <property type="protein sequence ID" value="AAA03630.1"/>
    <property type="molecule type" value="mRNA"/>
</dbReference>
<dbReference type="EMBL" id="S78220">
    <property type="protein sequence ID" value="AAB21215.1"/>
    <property type="molecule type" value="mRNA"/>
</dbReference>
<dbReference type="EMBL" id="S36219">
    <property type="protein sequence ID" value="AAB22216.1"/>
    <property type="molecule type" value="mRNA"/>
</dbReference>
<dbReference type="EMBL" id="S36271">
    <property type="protein sequence ID" value="AAB22217.1"/>
    <property type="molecule type" value="mRNA"/>
</dbReference>
<dbReference type="EMBL" id="DQ180741">
    <property type="protein sequence ID" value="ABA60098.1"/>
    <property type="molecule type" value="mRNA"/>
</dbReference>
<dbReference type="EMBL" id="DQ180742">
    <property type="protein sequence ID" value="ABA60099.1"/>
    <property type="molecule type" value="mRNA"/>
</dbReference>
<dbReference type="EMBL" id="AF440204">
    <property type="protein sequence ID" value="AAL33601.1"/>
    <property type="molecule type" value="Genomic_DNA"/>
</dbReference>
<dbReference type="EMBL" id="AK290022">
    <property type="protein sequence ID" value="BAF82711.1"/>
    <property type="molecule type" value="mRNA"/>
</dbReference>
<dbReference type="EMBL" id="AK295221">
    <property type="protein sequence ID" value="BAG58214.1"/>
    <property type="molecule type" value="mRNA"/>
</dbReference>
<dbReference type="EMBL" id="AK304403">
    <property type="protein sequence ID" value="BAG65237.1"/>
    <property type="molecule type" value="mRNA"/>
</dbReference>
<dbReference type="EMBL" id="AY449688">
    <property type="protein sequence ID" value="AAR08907.1"/>
    <property type="molecule type" value="Genomic_DNA"/>
</dbReference>
<dbReference type="EMBL" id="AL162424">
    <property type="status" value="NOT_ANNOTATED_CDS"/>
    <property type="molecule type" value="Genomic_DNA"/>
</dbReference>
<dbReference type="EMBL" id="AL359636">
    <property type="status" value="NOT_ANNOTATED_CDS"/>
    <property type="molecule type" value="Genomic_DNA"/>
</dbReference>
<dbReference type="EMBL" id="CH471090">
    <property type="protein sequence ID" value="EAW87530.1"/>
    <property type="molecule type" value="Genomic_DNA"/>
</dbReference>
<dbReference type="EMBL" id="BC029840">
    <property type="protein sequence ID" value="AAH29840.1"/>
    <property type="molecule type" value="mRNA"/>
</dbReference>
<dbReference type="CCDS" id="CCDS59520.1">
    <molecule id="P23219-3"/>
</dbReference>
<dbReference type="CCDS" id="CCDS59521.1">
    <molecule id="P23219-4"/>
</dbReference>
<dbReference type="CCDS" id="CCDS6842.1">
    <molecule id="P23219-1"/>
</dbReference>
<dbReference type="CCDS" id="CCDS6843.1">
    <molecule id="P23219-2"/>
</dbReference>
<dbReference type="PIR" id="JH0259">
    <property type="entry name" value="JH0259"/>
</dbReference>
<dbReference type="RefSeq" id="NP_000953.2">
    <molecule id="P23219-1"/>
    <property type="nucleotide sequence ID" value="NM_000962.3"/>
</dbReference>
<dbReference type="RefSeq" id="NP_001258094.1">
    <molecule id="P23219-4"/>
    <property type="nucleotide sequence ID" value="NM_001271165.2"/>
</dbReference>
<dbReference type="RefSeq" id="NP_001258095.1">
    <property type="nucleotide sequence ID" value="NM_001271166.1"/>
</dbReference>
<dbReference type="RefSeq" id="NP_001258297.1">
    <molecule id="P23219-3"/>
    <property type="nucleotide sequence ID" value="NM_001271368.2"/>
</dbReference>
<dbReference type="RefSeq" id="NP_542158.1">
    <molecule id="P23219-2"/>
    <property type="nucleotide sequence ID" value="NM_080591.3"/>
</dbReference>
<dbReference type="RefSeq" id="XP_011517178.1">
    <property type="nucleotide sequence ID" value="XM_011518876.2"/>
</dbReference>
<dbReference type="PDB" id="6Y3C">
    <property type="method" value="X-ray"/>
    <property type="resolution" value="3.36 A"/>
    <property type="chains" value="A=24-599"/>
</dbReference>
<dbReference type="PDBsum" id="6Y3C"/>
<dbReference type="SMR" id="P23219"/>
<dbReference type="BioGRID" id="111714">
    <property type="interactions" value="13"/>
</dbReference>
<dbReference type="CORUM" id="P23219"/>
<dbReference type="FunCoup" id="P23219">
    <property type="interactions" value="504"/>
</dbReference>
<dbReference type="IntAct" id="P23219">
    <property type="interactions" value="8"/>
</dbReference>
<dbReference type="MINT" id="P23219"/>
<dbReference type="STRING" id="9606.ENSP00000354612"/>
<dbReference type="BindingDB" id="P23219"/>
<dbReference type="ChEMBL" id="CHEMBL221"/>
<dbReference type="DrugBank" id="DB02047">
    <property type="generic name" value="(+)-2-(4-biphenyl)propionic acid"/>
</dbReference>
<dbReference type="DrugBank" id="DB02773">
    <property type="generic name" value="(3-Chloro-4-Propoxy-Phenyl)-Acetic Acid"/>
</dbReference>
<dbReference type="DrugBank" id="DB07983">
    <property type="generic name" value="1-(4-IODOBENZOYL)-5-METHOXY-2-METHYL INDOLE-3-ACETIC ACID"/>
</dbReference>
<dbReference type="DrugBank" id="DB07981">
    <property type="generic name" value="2-[1-(4-chlorobenzoyl)-5-methoxy-2-methyl-1H-indol-3-yl]-n-[(1R)-1-(hydroxymethyl)propyl]acetamide"/>
</dbReference>
<dbReference type="DrugBank" id="DB07984">
    <property type="generic name" value="2-[1-(4-chlorobenzoyl)-5-methoxy-2-methyl-1H-indol-3-yl]-n-[(1S)-1-(hydroxymethyl)propyl]acetamide"/>
</dbReference>
<dbReference type="DrugBank" id="DB02198">
    <property type="generic name" value="2-Bromoacetyl Group"/>
</dbReference>
<dbReference type="DrugBank" id="DB06736">
    <property type="generic name" value="Aceclofenac"/>
</dbReference>
<dbReference type="DrugBank" id="DB13783">
    <property type="generic name" value="Acemetacin"/>
</dbReference>
<dbReference type="DrugBank" id="DB00316">
    <property type="generic name" value="Acetaminophen"/>
</dbReference>
<dbReference type="DrugBank" id="DB03667">
    <property type="generic name" value="Acetic Acid Salicyloyl-Amino-Ester"/>
</dbReference>
<dbReference type="DrugBank" id="DB00945">
    <property type="generic name" value="Acetylsalicylic acid"/>
</dbReference>
<dbReference type="DrugBank" id="DB00233">
    <property type="generic name" value="Aminosalicylic acid"/>
</dbReference>
<dbReference type="DrugBank" id="DB16877">
    <property type="generic name" value="Ampiroxicam"/>
</dbReference>
<dbReference type="DrugBank" id="DB01435">
    <property type="generic name" value="Antipyrine"/>
</dbReference>
<dbReference type="DrugBank" id="DB01419">
    <property type="generic name" value="Antrafenine"/>
</dbReference>
<dbReference type="DrugBank" id="DB04557">
    <property type="generic name" value="Arachidonic Acid"/>
</dbReference>
<dbReference type="DrugBank" id="DB01014">
    <property type="generic name" value="Balsalazide"/>
</dbReference>
<dbReference type="DrugBank" id="DB13501">
    <property type="generic name" value="Bendazac"/>
</dbReference>
<dbReference type="DrugBank" id="DB09084">
    <property type="generic name" value="Benzydamine"/>
</dbReference>
<dbReference type="DrugBank" id="DB02379">
    <property type="generic name" value="Beta-D-Glucose"/>
</dbReference>
<dbReference type="DrugBank" id="DB00963">
    <property type="generic name" value="Bromfenac"/>
</dbReference>
<dbReference type="DrugBank" id="DB13346">
    <property type="generic name" value="Bufexamac"/>
</dbReference>
<dbReference type="DrugBank" id="DB13919">
    <property type="generic name" value="Candesartan"/>
</dbReference>
<dbReference type="DrugBank" id="DB00796">
    <property type="generic name" value="Candesartan cilexetil"/>
</dbReference>
<dbReference type="DrugBank" id="DB09061">
    <property type="generic name" value="Cannabidiol"/>
</dbReference>
<dbReference type="DrugBank" id="DB00821">
    <property type="generic name" value="Carprofen"/>
</dbReference>
<dbReference type="DrugBank" id="DB00672">
    <property type="generic name" value="Chlorpropamide"/>
</dbReference>
<dbReference type="DrugBank" id="DB01401">
    <property type="generic name" value="Choline magnesium trisalicylate"/>
</dbReference>
<dbReference type="DrugBank" id="DB14086">
    <property type="generic name" value="Cianidanol"/>
</dbReference>
<dbReference type="DrugBank" id="DB11672">
    <property type="generic name" value="Curcumin"/>
</dbReference>
<dbReference type="DrugBank" id="DB00250">
    <property type="generic name" value="Dapsone"/>
</dbReference>
<dbReference type="DrugBank" id="DB00035">
    <property type="generic name" value="Desmopressin"/>
</dbReference>
<dbReference type="DrugBank" id="DB09213">
    <property type="generic name" value="Dexibuprofen"/>
</dbReference>
<dbReference type="DrugBank" id="DB09214">
    <property type="generic name" value="Dexketoprofen"/>
</dbReference>
<dbReference type="DrugBank" id="DB00829">
    <property type="generic name" value="Diazepam"/>
</dbReference>
<dbReference type="DrugBank" id="DB00586">
    <property type="generic name" value="Diclofenac"/>
</dbReference>
<dbReference type="DrugBank" id="DB00711">
    <property type="generic name" value="Diethylcarbamazine"/>
</dbReference>
<dbReference type="DrugBank" id="DB00861">
    <property type="generic name" value="Diflunisal"/>
</dbReference>
<dbReference type="DrugBank" id="DB00154">
    <property type="generic name" value="Dihomo-gamma-linolenic acid"/>
</dbReference>
<dbReference type="DrugBank" id="DB01075">
    <property type="generic name" value="Diphenhydramine"/>
</dbReference>
<dbReference type="DrugBank" id="DB03756">
    <property type="generic name" value="Doconexent"/>
</dbReference>
<dbReference type="DrugBank" id="DB00470">
    <property type="generic name" value="Dronabinol"/>
</dbReference>
<dbReference type="DrugBank" id="DB09215">
    <property type="generic name" value="Droxicam"/>
</dbReference>
<dbReference type="DrugBank" id="DB00216">
    <property type="generic name" value="Eletriptan"/>
</dbReference>
<dbReference type="DrugBank" id="DB12039">
    <property type="generic name" value="Epicatechin"/>
</dbReference>
<dbReference type="DrugBank" id="DB16159">
    <property type="generic name" value="Esflurbiprofen"/>
</dbReference>
<dbReference type="DrugBank" id="DB00749">
    <property type="generic name" value="Etodolac"/>
</dbReference>
<dbReference type="DrugBank" id="DB00773">
    <property type="generic name" value="Etoposide"/>
</dbReference>
<dbReference type="DrugBank" id="DB07477">
    <property type="generic name" value="Felbinac"/>
</dbReference>
<dbReference type="DrugBank" id="DB08981">
    <property type="generic name" value="Fenbufen"/>
</dbReference>
<dbReference type="DrugBank" id="DB00573">
    <property type="generic name" value="Fenoprofen"/>
</dbReference>
<dbReference type="DrugBank" id="DB18267">
    <property type="generic name" value="Ferroheme"/>
</dbReference>
<dbReference type="DrugBank" id="DB02266">
    <property type="generic name" value="Flufenamic acid"/>
</dbReference>
<dbReference type="DrugBank" id="DB00712">
    <property type="generic name" value="Flurbiprofen"/>
</dbReference>
<dbReference type="DrugBank" id="DB03753">
    <property type="generic name" value="Flurbiprofen Methyl Ester"/>
</dbReference>
<dbReference type="DrugBank" id="DB11323">
    <property type="generic name" value="Glycol salicylate"/>
</dbReference>
<dbReference type="DrugBank" id="DB01355">
    <property type="generic name" value="Hexobarbital"/>
</dbReference>
<dbReference type="DrugBank" id="DB19283">
    <property type="generic name" value="Honokiol"/>
</dbReference>
<dbReference type="DrugBank" id="DB01892">
    <property type="generic name" value="Hyperforin"/>
</dbReference>
<dbReference type="DrugBank" id="DB01050">
    <property type="generic name" value="Ibuprofen"/>
</dbReference>
<dbReference type="DrugBank" id="DB00159">
    <property type="generic name" value="Icosapent"/>
</dbReference>
<dbReference type="DrugBank" id="DB01181">
    <property type="generic name" value="Ifosfamide"/>
</dbReference>
<dbReference type="DrugBank" id="DB12354">
    <property type="generic name" value="Imrecoxib"/>
</dbReference>
<dbReference type="DrugBank" id="DB00328">
    <property type="generic name" value="Indomethacin"/>
</dbReference>
<dbReference type="DrugBank" id="DB08951">
    <property type="generic name" value="Indoprofen"/>
</dbReference>
<dbReference type="DrugBank" id="DB01029">
    <property type="generic name" value="Irbesartan"/>
</dbReference>
<dbReference type="DrugBank" id="DB01221">
    <property type="generic name" value="Ketamine"/>
</dbReference>
<dbReference type="DrugBank" id="DB06738">
    <property type="generic name" value="Ketobemidone"/>
</dbReference>
<dbReference type="DrugBank" id="DB01009">
    <property type="generic name" value="Ketoprofen"/>
</dbReference>
<dbReference type="DrugBank" id="DB00465">
    <property type="generic name" value="Ketorolac"/>
</dbReference>
<dbReference type="DrugBank" id="DB06725">
    <property type="generic name" value="Lornoxicam"/>
</dbReference>
<dbReference type="DrugBank" id="DB09212">
    <property type="generic name" value="Loxoprofen"/>
</dbReference>
<dbReference type="DrugBank" id="DB01283">
    <property type="generic name" value="Lumiracoxib"/>
</dbReference>
<dbReference type="DrugBank" id="DB01397">
    <property type="generic name" value="Magnesium salicylate"/>
</dbReference>
<dbReference type="DrugBank" id="DB00939">
    <property type="generic name" value="Meclofenamic acid"/>
</dbReference>
<dbReference type="DrugBank" id="DB14009">
    <property type="generic name" value="Medical Cannabis"/>
</dbReference>
<dbReference type="DrugBank" id="DB00784">
    <property type="generic name" value="Mefenamic acid"/>
</dbReference>
<dbReference type="DrugBank" id="DB00814">
    <property type="generic name" value="Meloxicam"/>
</dbReference>
<dbReference type="DrugBank" id="DB11201">
    <property type="generic name" value="Menthyl salicylate"/>
</dbReference>
<dbReference type="DrugBank" id="DB00244">
    <property type="generic name" value="Mesalazine"/>
</dbReference>
<dbReference type="DrugBank" id="DB04817">
    <property type="generic name" value="Metamizole"/>
</dbReference>
<dbReference type="DrugBank" id="DB00350">
    <property type="generic name" value="Minoxidil"/>
</dbReference>
<dbReference type="DrugBank" id="DB00471">
    <property type="generic name" value="Montelukast"/>
</dbReference>
<dbReference type="DrugBank" id="DB09285">
    <property type="generic name" value="Morniflumate"/>
</dbReference>
<dbReference type="DrugBank" id="DB14011">
    <property type="generic name" value="Nabiximols"/>
</dbReference>
<dbReference type="DrugBank" id="DB00461">
    <property type="generic name" value="Nabumetone"/>
</dbReference>
<dbReference type="DrugBank" id="DB06682">
    <property type="generic name" value="Naproxcinod"/>
</dbReference>
<dbReference type="DrugBank" id="DB00788">
    <property type="generic name" value="Naproxen"/>
</dbReference>
<dbReference type="DrugBank" id="DB00731">
    <property type="generic name" value="Nateglinide"/>
</dbReference>
<dbReference type="DrugBank" id="DB05409">
    <property type="generic name" value="NCX 701"/>
</dbReference>
<dbReference type="DrugBank" id="DB06802">
    <property type="generic name" value="Nepafenac"/>
</dbReference>
<dbReference type="DrugBank" id="DB04552">
    <property type="generic name" value="Niflumic acid"/>
</dbReference>
<dbReference type="DrugBank" id="DB12445">
    <property type="generic name" value="Nitroaspirin"/>
</dbReference>
<dbReference type="DrugBank" id="DB01837">
    <property type="generic name" value="O-acetyl-L-serine"/>
</dbReference>
<dbReference type="DrugBank" id="DB01250">
    <property type="generic name" value="Olsalazine"/>
</dbReference>
<dbReference type="DrugBank" id="DB13308">
    <property type="generic name" value="Oxametacin"/>
</dbReference>
<dbReference type="DrugBank" id="DB00991">
    <property type="generic name" value="Oxaprozin"/>
</dbReference>
<dbReference type="DrugBank" id="DB03752">
    <property type="generic name" value="P-(2'-Iodo-5'-Thenoyl)Hydrotropic Acid"/>
</dbReference>
<dbReference type="DrugBank" id="DB12150">
    <property type="generic name" value="Pelubiprofen"/>
</dbReference>
<dbReference type="DrugBank" id="DB03783">
    <property type="generic name" value="Phenacetin"/>
</dbReference>
<dbReference type="DrugBank" id="DB11071">
    <property type="generic name" value="Phenyl salicylate"/>
</dbReference>
<dbReference type="DrugBank" id="DB00812">
    <property type="generic name" value="Phenylbutazone"/>
</dbReference>
<dbReference type="DrugBank" id="DB00554">
    <property type="generic name" value="Piroxicam"/>
</dbReference>
<dbReference type="DrugBank" id="DB13514">
    <property type="generic name" value="Pranoprofen"/>
</dbReference>
<dbReference type="DrugBank" id="DB09288">
    <property type="generic name" value="Propacetamol"/>
</dbReference>
<dbReference type="DrugBank" id="DB02110">
    <property type="generic name" value="Protoporphyrin Ix Containing Co"/>
</dbReference>
<dbReference type="DrugBank" id="DB11085">
    <property type="generic name" value="Resorcinol"/>
</dbReference>
<dbReference type="DrugBank" id="DB02709">
    <property type="generic name" value="Resveratrol"/>
</dbReference>
<dbReference type="DrugBank" id="DB00533">
    <property type="generic name" value="Rofecoxib"/>
</dbReference>
<dbReference type="DrugBank" id="DB00412">
    <property type="generic name" value="Rosiglitazone"/>
</dbReference>
<dbReference type="DrugBank" id="DB00936">
    <property type="generic name" value="Salicylic acid"/>
</dbReference>
<dbReference type="DrugBank" id="DB01399">
    <property type="generic name" value="Salsalate"/>
</dbReference>
<dbReference type="DrugBank" id="DB06739">
    <property type="generic name" value="Seratrodast"/>
</dbReference>
<dbReference type="DrugBank" id="DB00795">
    <property type="generic name" value="Sulfasalazine"/>
</dbReference>
<dbReference type="DrugBank" id="DB00605">
    <property type="generic name" value="Sulindac"/>
</dbReference>
<dbReference type="DrugBank" id="DB00870">
    <property type="generic name" value="Suprofen"/>
</dbReference>
<dbReference type="DrugBank" id="DB09295">
    <property type="generic name" value="Talniflumate"/>
</dbReference>
<dbReference type="DrugBank" id="DB00469">
    <property type="generic name" value="Tenoxicam"/>
</dbReference>
<dbReference type="DrugBank" id="DB00857">
    <property type="generic name" value="Terbinafine"/>
</dbReference>
<dbReference type="DrugBank" id="DB01041">
    <property type="generic name" value="Thalidomide"/>
</dbReference>
<dbReference type="DrugBank" id="DB01600">
    <property type="generic name" value="Tiaprofenic acid"/>
</dbReference>
<dbReference type="DrugBank" id="DB09216">
    <property type="generic name" value="Tolfenamic acid"/>
</dbReference>
<dbReference type="DrugBank" id="DB00500">
    <property type="generic name" value="Tolmetin"/>
</dbReference>
<dbReference type="DrugBank" id="DB05109">
    <property type="generic name" value="Trabectedin"/>
</dbReference>
<dbReference type="DrugBank" id="DB08814">
    <property type="generic name" value="Triflusal"/>
</dbReference>
<dbReference type="DrugBank" id="DB11079">
    <property type="generic name" value="Trolamine salicylate"/>
</dbReference>
<dbReference type="DrugBank" id="DB00313">
    <property type="generic name" value="Valproic acid"/>
</dbReference>
<dbReference type="DrugBank" id="DB00582">
    <property type="generic name" value="Voriconazole"/>
</dbReference>
<dbReference type="DrugBank" id="DB00549">
    <property type="generic name" value="Zafirlukast"/>
</dbReference>
<dbReference type="DrugBank" id="DB06737">
    <property type="generic name" value="Zaltoprofen"/>
</dbReference>
<dbReference type="DrugBank" id="DB00744">
    <property type="generic name" value="Zileuton"/>
</dbReference>
<dbReference type="DrugBank" id="DB04828">
    <property type="generic name" value="Zomepirac"/>
</dbReference>
<dbReference type="DrugBank" id="DB01198">
    <property type="generic name" value="Zopiclone"/>
</dbReference>
<dbReference type="DrugCentral" id="P23219"/>
<dbReference type="GuidetoPHARMACOLOGY" id="1375"/>
<dbReference type="SwissLipids" id="SLP:000001103"/>
<dbReference type="MoonDB" id="P23219">
    <property type="type" value="Curated"/>
</dbReference>
<dbReference type="PeroxiBase" id="3320">
    <property type="entry name" value="HsPGHS01"/>
</dbReference>
<dbReference type="GlyConnect" id="1648">
    <property type="glycosylation" value="1 N-Linked glycan (1 site)"/>
</dbReference>
<dbReference type="GlyCosmos" id="P23219">
    <property type="glycosylation" value="3 sites, 1 glycan"/>
</dbReference>
<dbReference type="GlyGen" id="P23219">
    <property type="glycosylation" value="7 sites, 6 N-linked glycans (2 sites), 1 O-linked glycan (1 site)"/>
</dbReference>
<dbReference type="iPTMnet" id="P23219"/>
<dbReference type="PhosphoSitePlus" id="P23219"/>
<dbReference type="BioMuta" id="PTGS1"/>
<dbReference type="DMDM" id="317373262"/>
<dbReference type="jPOST" id="P23219"/>
<dbReference type="MassIVE" id="P23219"/>
<dbReference type="PaxDb" id="9606-ENSP00000354612"/>
<dbReference type="PeptideAtlas" id="P23219"/>
<dbReference type="ProteomicsDB" id="4239"/>
<dbReference type="ProteomicsDB" id="54063">
    <molecule id="P23219-1"/>
</dbReference>
<dbReference type="ProteomicsDB" id="54064">
    <molecule id="P23219-2"/>
</dbReference>
<dbReference type="Pumba" id="P23219"/>
<dbReference type="Antibodypedia" id="775">
    <property type="antibodies" value="687 antibodies from 43 providers"/>
</dbReference>
<dbReference type="DNASU" id="5742"/>
<dbReference type="Ensembl" id="ENST00000223423.8">
    <molecule id="P23219-2"/>
    <property type="protein sequence ID" value="ENSP00000223423.4"/>
    <property type="gene ID" value="ENSG00000095303.17"/>
</dbReference>
<dbReference type="Ensembl" id="ENST00000362012.7">
    <molecule id="P23219-1"/>
    <property type="protein sequence ID" value="ENSP00000354612.2"/>
    <property type="gene ID" value="ENSG00000095303.17"/>
</dbReference>
<dbReference type="Ensembl" id="ENST00000373698.7">
    <molecule id="P23219-4"/>
    <property type="protein sequence ID" value="ENSP00000362802.5"/>
    <property type="gene ID" value="ENSG00000095303.17"/>
</dbReference>
<dbReference type="Ensembl" id="ENST00000540753.6">
    <molecule id="P23219-3"/>
    <property type="protein sequence ID" value="ENSP00000437709.1"/>
    <property type="gene ID" value="ENSG00000095303.17"/>
</dbReference>
<dbReference type="GeneID" id="5742"/>
<dbReference type="KEGG" id="hsa:5742"/>
<dbReference type="MANE-Select" id="ENST00000362012.7">
    <property type="protein sequence ID" value="ENSP00000354612.2"/>
    <property type="RefSeq nucleotide sequence ID" value="NM_000962.4"/>
    <property type="RefSeq protein sequence ID" value="NP_000953.2"/>
</dbReference>
<dbReference type="UCSC" id="uc004bmf.3">
    <molecule id="P23219-1"/>
    <property type="organism name" value="human"/>
</dbReference>
<dbReference type="AGR" id="HGNC:9604"/>
<dbReference type="CTD" id="5742"/>
<dbReference type="DisGeNET" id="5742"/>
<dbReference type="GeneCards" id="PTGS1"/>
<dbReference type="HGNC" id="HGNC:9604">
    <property type="gene designation" value="PTGS1"/>
</dbReference>
<dbReference type="HPA" id="ENSG00000095303">
    <property type="expression patterns" value="Tissue enhanced (intestine, skin, urinary bladder)"/>
</dbReference>
<dbReference type="MIM" id="176805">
    <property type="type" value="gene"/>
</dbReference>
<dbReference type="neXtProt" id="NX_P23219"/>
<dbReference type="OpenTargets" id="ENSG00000095303"/>
<dbReference type="PharmGKB" id="PA24346"/>
<dbReference type="VEuPathDB" id="HostDB:ENSG00000095303"/>
<dbReference type="eggNOG" id="KOG2408">
    <property type="taxonomic scope" value="Eukaryota"/>
</dbReference>
<dbReference type="GeneTree" id="ENSGT00390000010743"/>
<dbReference type="HOGENOM" id="CLU_022428_0_0_1"/>
<dbReference type="InParanoid" id="P23219"/>
<dbReference type="OMA" id="LFGSQFQ"/>
<dbReference type="OrthoDB" id="823504at2759"/>
<dbReference type="PAN-GO" id="P23219">
    <property type="GO annotations" value="5 GO annotations based on evolutionary models"/>
</dbReference>
<dbReference type="PhylomeDB" id="P23219"/>
<dbReference type="TreeFam" id="TF329675"/>
<dbReference type="BioCyc" id="MetaCyc:HS01815-MONOMER"/>
<dbReference type="BRENDA" id="1.14.99.1">
    <property type="organism ID" value="2681"/>
</dbReference>
<dbReference type="PathwayCommons" id="P23219"/>
<dbReference type="Reactome" id="R-HSA-140180">
    <property type="pathway name" value="COX reactions"/>
</dbReference>
<dbReference type="Reactome" id="R-HSA-2162123">
    <property type="pathway name" value="Synthesis of Prostaglandins (PG) and Thromboxanes (TX)"/>
</dbReference>
<dbReference type="SABIO-RK" id="P23219"/>
<dbReference type="SignaLink" id="P23219"/>
<dbReference type="SIGNOR" id="P23219"/>
<dbReference type="UniPathway" id="UPA00662"/>
<dbReference type="BioGRID-ORCS" id="5742">
    <property type="hits" value="6 hits in 1175 CRISPR screens"/>
</dbReference>
<dbReference type="ChiTaRS" id="PTGS1">
    <property type="organism name" value="human"/>
</dbReference>
<dbReference type="GeneWiki" id="PTGS1"/>
<dbReference type="GenomeRNAi" id="5742"/>
<dbReference type="Pharos" id="P23219">
    <property type="development level" value="Tclin"/>
</dbReference>
<dbReference type="PRO" id="PR:P23219"/>
<dbReference type="Proteomes" id="UP000005640">
    <property type="component" value="Chromosome 9"/>
</dbReference>
<dbReference type="RNAct" id="P23219">
    <property type="molecule type" value="protein"/>
</dbReference>
<dbReference type="Bgee" id="ENSG00000095303">
    <property type="expression patterns" value="Expressed in stromal cell of endometrium and 180 other cell types or tissues"/>
</dbReference>
<dbReference type="ExpressionAtlas" id="P23219">
    <property type="expression patterns" value="baseline and differential"/>
</dbReference>
<dbReference type="GO" id="GO:0005737">
    <property type="term" value="C:cytoplasm"/>
    <property type="evidence" value="ECO:0000314"/>
    <property type="project" value="MGI"/>
</dbReference>
<dbReference type="GO" id="GO:0005789">
    <property type="term" value="C:endoplasmic reticulum membrane"/>
    <property type="evidence" value="ECO:0000304"/>
    <property type="project" value="Reactome"/>
</dbReference>
<dbReference type="GO" id="GO:0070062">
    <property type="term" value="C:extracellular exosome"/>
    <property type="evidence" value="ECO:0007005"/>
    <property type="project" value="UniProtKB"/>
</dbReference>
<dbReference type="GO" id="GO:0043005">
    <property type="term" value="C:neuron projection"/>
    <property type="evidence" value="ECO:0000318"/>
    <property type="project" value="GO_Central"/>
</dbReference>
<dbReference type="GO" id="GO:0001750">
    <property type="term" value="C:photoreceptor outer segment"/>
    <property type="evidence" value="ECO:0007669"/>
    <property type="project" value="Ensembl"/>
</dbReference>
<dbReference type="GO" id="GO:0020037">
    <property type="term" value="F:heme binding"/>
    <property type="evidence" value="ECO:0007669"/>
    <property type="project" value="InterPro"/>
</dbReference>
<dbReference type="GO" id="GO:0046872">
    <property type="term" value="F:metal ion binding"/>
    <property type="evidence" value="ECO:0007669"/>
    <property type="project" value="UniProtKB-KW"/>
</dbReference>
<dbReference type="GO" id="GO:0016702">
    <property type="term" value="F:oxidoreductase activity, acting on single donors with incorporation of molecular oxygen, incorporation of two atoms of oxygen"/>
    <property type="evidence" value="ECO:0000318"/>
    <property type="project" value="GO_Central"/>
</dbReference>
<dbReference type="GO" id="GO:0004601">
    <property type="term" value="F:peroxidase activity"/>
    <property type="evidence" value="ECO:0007669"/>
    <property type="project" value="UniProtKB-KW"/>
</dbReference>
<dbReference type="GO" id="GO:0004666">
    <property type="term" value="F:prostaglandin-endoperoxide synthase activity"/>
    <property type="evidence" value="ECO:0000314"/>
    <property type="project" value="BHF-UCL"/>
</dbReference>
<dbReference type="GO" id="GO:0019371">
    <property type="term" value="P:cyclooxygenase pathway"/>
    <property type="evidence" value="ECO:0000314"/>
    <property type="project" value="BHF-UCL"/>
</dbReference>
<dbReference type="GO" id="GO:0001516">
    <property type="term" value="P:prostaglandin biosynthetic process"/>
    <property type="evidence" value="ECO:0000250"/>
    <property type="project" value="UniProtKB"/>
</dbReference>
<dbReference type="GO" id="GO:0008217">
    <property type="term" value="P:regulation of blood pressure"/>
    <property type="evidence" value="ECO:0000250"/>
    <property type="project" value="UniProtKB"/>
</dbReference>
<dbReference type="GO" id="GO:0042127">
    <property type="term" value="P:regulation of cell population proliferation"/>
    <property type="evidence" value="ECO:0007669"/>
    <property type="project" value="Ensembl"/>
</dbReference>
<dbReference type="GO" id="GO:0006979">
    <property type="term" value="P:response to oxidative stress"/>
    <property type="evidence" value="ECO:0007669"/>
    <property type="project" value="InterPro"/>
</dbReference>
<dbReference type="CDD" id="cd00054">
    <property type="entry name" value="EGF_CA"/>
    <property type="match status" value="1"/>
</dbReference>
<dbReference type="CDD" id="cd09816">
    <property type="entry name" value="prostaglandin_endoperoxide_synthase"/>
    <property type="match status" value="1"/>
</dbReference>
<dbReference type="FunFam" id="1.10.640.10:FF:000002">
    <property type="entry name" value="Prostaglandin G/H synthase 2"/>
    <property type="match status" value="1"/>
</dbReference>
<dbReference type="FunFam" id="2.10.25.10:FF:000235">
    <property type="entry name" value="Prostaglandin G/H synthase 2"/>
    <property type="match status" value="1"/>
</dbReference>
<dbReference type="Gene3D" id="1.10.640.10">
    <property type="entry name" value="Haem peroxidase domain superfamily, animal type"/>
    <property type="match status" value="1"/>
</dbReference>
<dbReference type="Gene3D" id="2.10.25.10">
    <property type="entry name" value="Laminin"/>
    <property type="match status" value="1"/>
</dbReference>
<dbReference type="InterPro" id="IPR000742">
    <property type="entry name" value="EGF-like_dom"/>
</dbReference>
<dbReference type="InterPro" id="IPR019791">
    <property type="entry name" value="Haem_peroxidase_animal"/>
</dbReference>
<dbReference type="InterPro" id="IPR010255">
    <property type="entry name" value="Haem_peroxidase_sf"/>
</dbReference>
<dbReference type="InterPro" id="IPR037120">
    <property type="entry name" value="Haem_peroxidase_sf_animal"/>
</dbReference>
<dbReference type="InterPro" id="IPR050783">
    <property type="entry name" value="Oxylipin_biosynth_metab"/>
</dbReference>
<dbReference type="PANTHER" id="PTHR11903">
    <property type="entry name" value="PROSTAGLANDIN G/H SYNTHASE"/>
    <property type="match status" value="1"/>
</dbReference>
<dbReference type="PANTHER" id="PTHR11903:SF6">
    <property type="entry name" value="PROSTAGLANDIN G_H SYNTHASE 1"/>
    <property type="match status" value="1"/>
</dbReference>
<dbReference type="Pfam" id="PF03098">
    <property type="entry name" value="An_peroxidase"/>
    <property type="match status" value="1"/>
</dbReference>
<dbReference type="PRINTS" id="PR00457">
    <property type="entry name" value="ANPEROXIDASE"/>
</dbReference>
<dbReference type="SUPFAM" id="SSF57196">
    <property type="entry name" value="EGF/Laminin"/>
    <property type="match status" value="1"/>
</dbReference>
<dbReference type="SUPFAM" id="SSF48113">
    <property type="entry name" value="Heme-dependent peroxidases"/>
    <property type="match status" value="1"/>
</dbReference>
<dbReference type="PROSITE" id="PS50026">
    <property type="entry name" value="EGF_3"/>
    <property type="match status" value="1"/>
</dbReference>
<dbReference type="PROSITE" id="PS50292">
    <property type="entry name" value="PEROXIDASE_3"/>
    <property type="match status" value="1"/>
</dbReference>
<feature type="signal peptide">
    <location>
        <begin position="1"/>
        <end position="23"/>
    </location>
</feature>
<feature type="chain" id="PRO_0000023868" description="Prostaglandin G/H synthase 1">
    <location>
        <begin position="24"/>
        <end position="599"/>
    </location>
</feature>
<feature type="domain" description="EGF-like" evidence="4">
    <location>
        <begin position="31"/>
        <end position="69"/>
    </location>
</feature>
<feature type="active site" description="Proton acceptor" evidence="5">
    <location>
        <position position="206"/>
    </location>
</feature>
<feature type="active site" description="For cyclooxygenase activity" evidence="1">
    <location>
        <position position="384"/>
    </location>
</feature>
<feature type="binding site" description="axial binding residue" evidence="5">
    <location>
        <position position="387"/>
    </location>
    <ligand>
        <name>heme b</name>
        <dbReference type="ChEBI" id="CHEBI:60344"/>
    </ligand>
    <ligandPart>
        <name>Fe</name>
        <dbReference type="ChEBI" id="CHEBI:18248"/>
    </ligandPart>
</feature>
<feature type="site" description="Aspirin-acetylated serine">
    <location>
        <position position="529"/>
    </location>
</feature>
<feature type="glycosylation site" description="N-linked (GlcNAc...) asparagine" evidence="3">
    <location>
        <position position="67"/>
    </location>
</feature>
<feature type="glycosylation site" description="N-linked (GlcNAc...) asparagine" evidence="3">
    <location>
        <position position="103"/>
    </location>
</feature>
<feature type="glycosylation site" description="N-linked (GlcNAc...) asparagine" evidence="3">
    <location>
        <position position="143"/>
    </location>
</feature>
<feature type="disulfide bond" evidence="1">
    <location>
        <begin position="35"/>
        <end position="46"/>
    </location>
</feature>
<feature type="disulfide bond" evidence="1">
    <location>
        <begin position="36"/>
        <end position="158"/>
    </location>
</feature>
<feature type="disulfide bond" evidence="1">
    <location>
        <begin position="40"/>
        <end position="56"/>
    </location>
</feature>
<feature type="disulfide bond" evidence="1">
    <location>
        <begin position="58"/>
        <end position="68"/>
    </location>
</feature>
<feature type="disulfide bond" evidence="1">
    <location>
        <begin position="568"/>
        <end position="574"/>
    </location>
</feature>
<feature type="splice variant" id="VSP_046932" description="In isoform 4." evidence="17">
    <location>
        <begin position="1"/>
        <end position="109"/>
    </location>
</feature>
<feature type="splice variant" id="VSP_053936" description="In isoform 3." evidence="17">
    <original>MSRSLLLWFLLFLLLLPPLPVLLADPGAPTPV</original>
    <variation>MRKPRLM</variation>
    <location>
        <begin position="1"/>
        <end position="32"/>
    </location>
</feature>
<feature type="splice variant" id="VSP_054862" description="In isoform 5." evidence="20">
    <original>MSR</original>
    <variation>MSRECDPGARWGIFLASGGALNARLSPSSLSSAG</variation>
    <location>
        <begin position="1"/>
        <end position="3"/>
    </location>
</feature>
<feature type="splice variant" id="VSP_054863" description="In isoform 6." evidence="20">
    <original>MSR</original>
    <variation>MSRECDPGARWGIFLASWWSLECQLSPSSLSSAG</variation>
    <location>
        <begin position="1"/>
        <end position="3"/>
    </location>
</feature>
<feature type="splice variant" id="VSP_004673" description="In isoform 2 and isoform 3." evidence="17 19">
    <location>
        <begin position="396"/>
        <end position="432"/>
    </location>
</feature>
<feature type="sequence variant" id="VAR_013451" description="In dbSNP:rs1236913." evidence="6 7 9 10 11 12 13 15 16">
    <original>W</original>
    <variation>R</variation>
    <location>
        <position position="8"/>
    </location>
</feature>
<feature type="sequence variant" id="VAR_013452" description="In dbSNP:rs3842787." evidence="6 16">
    <original>P</original>
    <variation>L</variation>
    <location>
        <position position="17"/>
    </location>
</feature>
<feature type="sequence variant" id="VAR_019161" description="In dbSNP:rs3842789." evidence="16">
    <original>R</original>
    <variation>H</variation>
    <location>
        <position position="53"/>
    </location>
</feature>
<feature type="sequence variant" id="VAR_019162" description="In dbSNP:rs10306140." evidence="16">
    <original>R</original>
    <variation>L</variation>
    <location>
        <position position="149"/>
    </location>
</feature>
<feature type="sequence variant" id="VAR_056663" description="In dbSNP:rs3842792.">
    <original>K</original>
    <variation>T</variation>
    <location>
        <position position="185"/>
    </location>
</feature>
<feature type="sequence variant" id="VAR_019163" description="In dbSNP:rs5789." evidence="8 16">
    <original>L</original>
    <variation>M</variation>
    <location>
        <position position="237"/>
    </location>
</feature>
<feature type="sequence variant" id="VAR_056664" description="In dbSNP:rs3842799.">
    <original>K</original>
    <variation>R</variation>
    <location>
        <position position="341"/>
    </location>
</feature>
<feature type="sequence variant" id="VAR_013453" description="In dbSNP:rs5791.">
    <original>K</original>
    <variation>R</variation>
    <location>
        <position position="359"/>
    </location>
</feature>
<feature type="sequence variant" id="VAR_013454" description="In dbSNP:rs5792.">
    <original>I</original>
    <variation>V</variation>
    <location>
        <position position="443"/>
    </location>
</feature>
<feature type="sequence variant" id="VAR_028017" description="In dbSNP:rs5794." evidence="8">
    <original>V</original>
    <variation>I</variation>
    <location>
        <position position="481"/>
    </location>
</feature>
<feature type="mutagenesis site" description="Abolishes cyclooxygenase activity." evidence="12">
    <original>S</original>
    <variation>N</variation>
    <location>
        <position position="529"/>
    </location>
</feature>
<feature type="sequence conflict" description="In Ref. 1; AAA36439." evidence="21" ref="1">
    <original>F</original>
    <variation>L</variation>
    <location>
        <position position="12"/>
    </location>
</feature>
<feature type="sequence conflict" description="In Ref. 1; AAA36439." evidence="21" ref="1">
    <original>R</original>
    <variation>L</variation>
    <location>
        <position position="113"/>
    </location>
</feature>
<feature type="sequence conflict" description="In Ref. 1; AAA36439." evidence="21" ref="1">
    <original>M</original>
    <variation>T</variation>
    <location>
        <position position="378"/>
    </location>
</feature>
<feature type="sequence conflict" description="In Ref. 7; BAG65237." evidence="21" ref="7">
    <original>D</original>
    <variation>G</variation>
    <location>
        <position position="423"/>
    </location>
</feature>
<feature type="helix" evidence="26">
    <location>
        <begin position="34"/>
        <end position="37"/>
    </location>
</feature>
<feature type="strand" evidence="26">
    <location>
        <begin position="45"/>
        <end position="49"/>
    </location>
</feature>
<feature type="turn" evidence="26">
    <location>
        <begin position="50"/>
        <end position="52"/>
    </location>
</feature>
<feature type="strand" evidence="26">
    <location>
        <begin position="53"/>
        <end position="57"/>
    </location>
</feature>
<feature type="strand" evidence="26">
    <location>
        <begin position="61"/>
        <end position="64"/>
    </location>
</feature>
<feature type="turn" evidence="26">
    <location>
        <begin position="65"/>
        <end position="68"/>
    </location>
</feature>
<feature type="helix" evidence="26">
    <location>
        <begin position="73"/>
        <end position="79"/>
    </location>
</feature>
<feature type="helix" evidence="26">
    <location>
        <begin position="85"/>
        <end position="91"/>
    </location>
</feature>
<feature type="helix" evidence="26">
    <location>
        <begin position="96"/>
        <end position="103"/>
    </location>
</feature>
<feature type="helix" evidence="26">
    <location>
        <begin position="107"/>
        <end position="120"/>
    </location>
</feature>
<feature type="strand" evidence="26">
    <location>
        <begin position="129"/>
        <end position="132"/>
    </location>
</feature>
<feature type="helix" evidence="26">
    <location>
        <begin position="138"/>
        <end position="142"/>
    </location>
</feature>
<feature type="strand" evidence="26">
    <location>
        <begin position="148"/>
        <end position="151"/>
    </location>
</feature>
<feature type="strand" evidence="26">
    <location>
        <begin position="158"/>
        <end position="160"/>
    </location>
</feature>
<feature type="strand" evidence="26">
    <location>
        <begin position="163"/>
        <end position="166"/>
    </location>
</feature>
<feature type="helix" evidence="26">
    <location>
        <begin position="173"/>
        <end position="179"/>
    </location>
</feature>
<feature type="helix" evidence="26">
    <location>
        <begin position="195"/>
        <end position="205"/>
    </location>
</feature>
<feature type="turn" evidence="26">
    <location>
        <begin position="206"/>
        <end position="208"/>
    </location>
</feature>
<feature type="turn" evidence="26">
    <location>
        <begin position="213"/>
        <end position="215"/>
    </location>
</feature>
<feature type="strand" evidence="26">
    <location>
        <begin position="217"/>
        <end position="221"/>
    </location>
</feature>
<feature type="helix" evidence="26">
    <location>
        <begin position="230"/>
        <end position="233"/>
    </location>
</feature>
<feature type="strand" evidence="26">
    <location>
        <begin position="235"/>
        <end position="237"/>
    </location>
</feature>
<feature type="helix" evidence="26">
    <location>
        <begin position="238"/>
        <end position="243"/>
    </location>
</feature>
<feature type="strand" evidence="26">
    <location>
        <begin position="254"/>
        <end position="256"/>
    </location>
</feature>
<feature type="strand" evidence="26">
    <location>
        <begin position="259"/>
        <end position="261"/>
    </location>
</feature>
<feature type="turn" evidence="26">
    <location>
        <begin position="265"/>
        <end position="267"/>
    </location>
</feature>
<feature type="turn" evidence="26">
    <location>
        <begin position="280"/>
        <end position="282"/>
    </location>
</feature>
<feature type="strand" evidence="26">
    <location>
        <begin position="287"/>
        <end position="290"/>
    </location>
</feature>
<feature type="helix" evidence="26">
    <location>
        <begin position="291"/>
        <end position="293"/>
    </location>
</feature>
<feature type="helix" evidence="26">
    <location>
        <begin position="295"/>
        <end position="318"/>
    </location>
</feature>
<feature type="helix" evidence="26">
    <location>
        <begin position="324"/>
        <end position="345"/>
    </location>
</feature>
<feature type="helix" evidence="26">
    <location>
        <begin position="347"/>
        <end position="352"/>
    </location>
</feature>
<feature type="helix" evidence="26">
    <location>
        <begin position="362"/>
        <end position="365"/>
    </location>
</feature>
<feature type="strand" evidence="26">
    <location>
        <begin position="366"/>
        <end position="368"/>
    </location>
</feature>
<feature type="helix" evidence="26">
    <location>
        <begin position="378"/>
        <end position="383"/>
    </location>
</feature>
<feature type="helix" evidence="26">
    <location>
        <begin position="387"/>
        <end position="389"/>
    </location>
</feature>
<feature type="strand" evidence="26">
    <location>
        <begin position="392"/>
        <end position="394"/>
    </location>
</feature>
<feature type="helix" evidence="26">
    <location>
        <begin position="403"/>
        <end position="406"/>
    </location>
</feature>
<feature type="helix" evidence="26">
    <location>
        <begin position="412"/>
        <end position="425"/>
    </location>
</feature>
<feature type="strand" evidence="26">
    <location>
        <begin position="427"/>
        <end position="429"/>
    </location>
</feature>
<feature type="helix" evidence="26">
    <location>
        <begin position="441"/>
        <end position="443"/>
    </location>
</feature>
<feature type="helix" evidence="26">
    <location>
        <begin position="444"/>
        <end position="456"/>
    </location>
</feature>
<feature type="helix" evidence="26">
    <location>
        <begin position="462"/>
        <end position="468"/>
    </location>
</feature>
<feature type="strand" evidence="26">
    <location>
        <begin position="475"/>
        <end position="477"/>
    </location>
</feature>
<feature type="helix" evidence="26">
    <location>
        <begin position="478"/>
        <end position="481"/>
    </location>
</feature>
<feature type="helix" evidence="26">
    <location>
        <begin position="484"/>
        <end position="494"/>
    </location>
</feature>
<feature type="helix" evidence="26">
    <location>
        <begin position="497"/>
        <end position="499"/>
    </location>
</feature>
<feature type="helix" evidence="26">
    <location>
        <begin position="502"/>
        <end position="507"/>
    </location>
</feature>
<feature type="strand" evidence="26">
    <location>
        <begin position="516"/>
        <end position="518"/>
    </location>
</feature>
<feature type="helix" evidence="26">
    <location>
        <begin position="519"/>
        <end position="533"/>
    </location>
</feature>
<feature type="helix" evidence="26">
    <location>
        <begin position="537"/>
        <end position="539"/>
    </location>
</feature>
<feature type="turn" evidence="26">
    <location>
        <begin position="541"/>
        <end position="543"/>
    </location>
</feature>
<feature type="turn" evidence="26">
    <location>
        <begin position="546"/>
        <end position="550"/>
    </location>
</feature>
<feature type="helix" evidence="26">
    <location>
        <begin position="552"/>
        <end position="558"/>
    </location>
</feature>
<feature type="helix" evidence="26">
    <location>
        <begin position="564"/>
        <end position="567"/>
    </location>
</feature>
<feature type="strand" evidence="26">
    <location>
        <begin position="570"/>
        <end position="573"/>
    </location>
</feature>
<feature type="strand" evidence="26">
    <location>
        <begin position="578"/>
        <end position="580"/>
    </location>
</feature>
<sequence>MSRSLLLWFLLFLLLLPPLPVLLADPGAPTPVNPCCYYPCQHQGICVRFGLDRYQCDCTRTGYSGPNCTIPGLWTWLRNSLRPSPSFTHFLLTHGRWFWEFVNATFIREMLMRLVLTVRSNLIPSPPTYNSAHDYISWESFSNVSYYTRILPSVPKDCPTPMGTKGKKQLPDAQLLARRFLLRRKFIPDPQGTNLMFAFFAQHFTHQFFKTSGKMGPGFTKALGHGVDLGHIYGDNLERQYQLRLFKDGKLKYQVLDGEMYPPSVEEAPVLMHYPRGIPPQSQMAVGQEVFGLLPGLMLYATLWLREHNRVCDLLKAEHPTWGDEQLFQTTRLILIGETIKIVIEEYVQQLSGYFLQLKFDPELLFGVQFQYRNRIAMEFNHLYHWHPLMPDSFKVGSQEYSYEQFLFNTSMLVDYGVEALVDAFSRQIAGRIGGGRNMDHHILHVAVDVIRESREMRLQPFNEYRKRFGMKPYTSFQELVGEKEMAAELEELYGDIDALEFYPGLLLEKCHPNSIFGESMIEIGAPFSLKGLLGNPICSPEYWKPSTFGGEVGFNIVKTATLKKLVCLNTKTCPYVSFRVPDASQDDGPAVERPSTEL</sequence>